<accession>Q3AI71</accession>
<dbReference type="EC" id="1.1.1.267" evidence="1"/>
<dbReference type="EMBL" id="CP000110">
    <property type="protein sequence ID" value="ABB35711.1"/>
    <property type="molecule type" value="Genomic_DNA"/>
</dbReference>
<dbReference type="RefSeq" id="WP_011364920.1">
    <property type="nucleotide sequence ID" value="NC_007516.1"/>
</dbReference>
<dbReference type="SMR" id="Q3AI71"/>
<dbReference type="STRING" id="110662.Syncc9605_1970"/>
<dbReference type="KEGG" id="syd:Syncc9605_1970"/>
<dbReference type="eggNOG" id="COG0743">
    <property type="taxonomic scope" value="Bacteria"/>
</dbReference>
<dbReference type="HOGENOM" id="CLU_035714_4_0_3"/>
<dbReference type="OrthoDB" id="9806546at2"/>
<dbReference type="UniPathway" id="UPA00056">
    <property type="reaction ID" value="UER00092"/>
</dbReference>
<dbReference type="GO" id="GO:0030604">
    <property type="term" value="F:1-deoxy-D-xylulose-5-phosphate reductoisomerase activity"/>
    <property type="evidence" value="ECO:0007669"/>
    <property type="project" value="UniProtKB-UniRule"/>
</dbReference>
<dbReference type="GO" id="GO:0030145">
    <property type="term" value="F:manganese ion binding"/>
    <property type="evidence" value="ECO:0007669"/>
    <property type="project" value="TreeGrafter"/>
</dbReference>
<dbReference type="GO" id="GO:0070402">
    <property type="term" value="F:NADPH binding"/>
    <property type="evidence" value="ECO:0007669"/>
    <property type="project" value="InterPro"/>
</dbReference>
<dbReference type="GO" id="GO:0051484">
    <property type="term" value="P:isopentenyl diphosphate biosynthetic process, methylerythritol 4-phosphate pathway involved in terpenoid biosynthetic process"/>
    <property type="evidence" value="ECO:0007669"/>
    <property type="project" value="TreeGrafter"/>
</dbReference>
<dbReference type="FunFam" id="3.40.50.720:FF:000045">
    <property type="entry name" value="1-deoxy-D-xylulose 5-phosphate reductoisomerase"/>
    <property type="match status" value="1"/>
</dbReference>
<dbReference type="Gene3D" id="1.10.1740.10">
    <property type="match status" value="1"/>
</dbReference>
<dbReference type="Gene3D" id="3.40.50.720">
    <property type="entry name" value="NAD(P)-binding Rossmann-like Domain"/>
    <property type="match status" value="1"/>
</dbReference>
<dbReference type="HAMAP" id="MF_00183">
    <property type="entry name" value="DXP_reductoisom"/>
    <property type="match status" value="1"/>
</dbReference>
<dbReference type="InterPro" id="IPR003821">
    <property type="entry name" value="DXP_reductoisomerase"/>
</dbReference>
<dbReference type="InterPro" id="IPR013644">
    <property type="entry name" value="DXP_reductoisomerase_C"/>
</dbReference>
<dbReference type="InterPro" id="IPR013512">
    <property type="entry name" value="DXP_reductoisomerase_N"/>
</dbReference>
<dbReference type="InterPro" id="IPR026877">
    <property type="entry name" value="DXPR_C"/>
</dbReference>
<dbReference type="InterPro" id="IPR036169">
    <property type="entry name" value="DXPR_C_sf"/>
</dbReference>
<dbReference type="InterPro" id="IPR036291">
    <property type="entry name" value="NAD(P)-bd_dom_sf"/>
</dbReference>
<dbReference type="NCBIfam" id="TIGR00243">
    <property type="entry name" value="Dxr"/>
    <property type="match status" value="1"/>
</dbReference>
<dbReference type="NCBIfam" id="NF009114">
    <property type="entry name" value="PRK12464.1"/>
    <property type="match status" value="1"/>
</dbReference>
<dbReference type="PANTHER" id="PTHR30525">
    <property type="entry name" value="1-DEOXY-D-XYLULOSE 5-PHOSPHATE REDUCTOISOMERASE"/>
    <property type="match status" value="1"/>
</dbReference>
<dbReference type="PANTHER" id="PTHR30525:SF0">
    <property type="entry name" value="1-DEOXY-D-XYLULOSE 5-PHOSPHATE REDUCTOISOMERASE, CHLOROPLASTIC"/>
    <property type="match status" value="1"/>
</dbReference>
<dbReference type="Pfam" id="PF08436">
    <property type="entry name" value="DXP_redisom_C"/>
    <property type="match status" value="1"/>
</dbReference>
<dbReference type="Pfam" id="PF02670">
    <property type="entry name" value="DXP_reductoisom"/>
    <property type="match status" value="1"/>
</dbReference>
<dbReference type="Pfam" id="PF13288">
    <property type="entry name" value="DXPR_C"/>
    <property type="match status" value="1"/>
</dbReference>
<dbReference type="PIRSF" id="PIRSF006205">
    <property type="entry name" value="Dxp_reductismrs"/>
    <property type="match status" value="1"/>
</dbReference>
<dbReference type="SUPFAM" id="SSF69055">
    <property type="entry name" value="1-deoxy-D-xylulose-5-phosphate reductoisomerase, C-terminal domain"/>
    <property type="match status" value="1"/>
</dbReference>
<dbReference type="SUPFAM" id="SSF55347">
    <property type="entry name" value="Glyceraldehyde-3-phosphate dehydrogenase-like, C-terminal domain"/>
    <property type="match status" value="1"/>
</dbReference>
<dbReference type="SUPFAM" id="SSF51735">
    <property type="entry name" value="NAD(P)-binding Rossmann-fold domains"/>
    <property type="match status" value="1"/>
</dbReference>
<evidence type="ECO:0000255" key="1">
    <source>
        <dbReference type="HAMAP-Rule" id="MF_00183"/>
    </source>
</evidence>
<name>DXR_SYNSC</name>
<feature type="chain" id="PRO_1000098519" description="1-deoxy-D-xylulose 5-phosphate reductoisomerase">
    <location>
        <begin position="1"/>
        <end position="415"/>
    </location>
</feature>
<feature type="binding site" evidence="1">
    <location>
        <position position="10"/>
    </location>
    <ligand>
        <name>NADPH</name>
        <dbReference type="ChEBI" id="CHEBI:57783"/>
    </ligand>
</feature>
<feature type="binding site" evidence="1">
    <location>
        <position position="11"/>
    </location>
    <ligand>
        <name>NADPH</name>
        <dbReference type="ChEBI" id="CHEBI:57783"/>
    </ligand>
</feature>
<feature type="binding site" evidence="1">
    <location>
        <position position="12"/>
    </location>
    <ligand>
        <name>NADPH</name>
        <dbReference type="ChEBI" id="CHEBI:57783"/>
    </ligand>
</feature>
<feature type="binding site" evidence="1">
    <location>
        <position position="13"/>
    </location>
    <ligand>
        <name>NADPH</name>
        <dbReference type="ChEBI" id="CHEBI:57783"/>
    </ligand>
</feature>
<feature type="binding site" evidence="1">
    <location>
        <position position="36"/>
    </location>
    <ligand>
        <name>NADPH</name>
        <dbReference type="ChEBI" id="CHEBI:57783"/>
    </ligand>
</feature>
<feature type="binding site" evidence="1">
    <location>
        <position position="37"/>
    </location>
    <ligand>
        <name>NADPH</name>
        <dbReference type="ChEBI" id="CHEBI:57783"/>
    </ligand>
</feature>
<feature type="binding site" evidence="1">
    <location>
        <position position="38"/>
    </location>
    <ligand>
        <name>NADPH</name>
        <dbReference type="ChEBI" id="CHEBI:57783"/>
    </ligand>
</feature>
<feature type="binding site" evidence="1">
    <location>
        <position position="128"/>
    </location>
    <ligand>
        <name>NADPH</name>
        <dbReference type="ChEBI" id="CHEBI:57783"/>
    </ligand>
</feature>
<feature type="binding site" evidence="1">
    <location>
        <position position="129"/>
    </location>
    <ligand>
        <name>1-deoxy-D-xylulose 5-phosphate</name>
        <dbReference type="ChEBI" id="CHEBI:57792"/>
    </ligand>
</feature>
<feature type="binding site" evidence="1">
    <location>
        <position position="130"/>
    </location>
    <ligand>
        <name>NADPH</name>
        <dbReference type="ChEBI" id="CHEBI:57783"/>
    </ligand>
</feature>
<feature type="binding site" evidence="1">
    <location>
        <position position="154"/>
    </location>
    <ligand>
        <name>Mn(2+)</name>
        <dbReference type="ChEBI" id="CHEBI:29035"/>
    </ligand>
</feature>
<feature type="binding site" evidence="1">
    <location>
        <position position="155"/>
    </location>
    <ligand>
        <name>1-deoxy-D-xylulose 5-phosphate</name>
        <dbReference type="ChEBI" id="CHEBI:57792"/>
    </ligand>
</feature>
<feature type="binding site" evidence="1">
    <location>
        <position position="156"/>
    </location>
    <ligand>
        <name>1-deoxy-D-xylulose 5-phosphate</name>
        <dbReference type="ChEBI" id="CHEBI:57792"/>
    </ligand>
</feature>
<feature type="binding site" evidence="1">
    <location>
        <position position="156"/>
    </location>
    <ligand>
        <name>Mn(2+)</name>
        <dbReference type="ChEBI" id="CHEBI:29035"/>
    </ligand>
</feature>
<feature type="binding site" evidence="1">
    <location>
        <position position="192"/>
    </location>
    <ligand>
        <name>1-deoxy-D-xylulose 5-phosphate</name>
        <dbReference type="ChEBI" id="CHEBI:57792"/>
    </ligand>
</feature>
<feature type="binding site" evidence="1">
    <location>
        <position position="215"/>
    </location>
    <ligand>
        <name>1-deoxy-D-xylulose 5-phosphate</name>
        <dbReference type="ChEBI" id="CHEBI:57792"/>
    </ligand>
</feature>
<feature type="binding site" evidence="1">
    <location>
        <position position="221"/>
    </location>
    <ligand>
        <name>NADPH</name>
        <dbReference type="ChEBI" id="CHEBI:57783"/>
    </ligand>
</feature>
<feature type="binding site" evidence="1">
    <location>
        <position position="228"/>
    </location>
    <ligand>
        <name>1-deoxy-D-xylulose 5-phosphate</name>
        <dbReference type="ChEBI" id="CHEBI:57792"/>
    </ligand>
</feature>
<feature type="binding site" evidence="1">
    <location>
        <position position="233"/>
    </location>
    <ligand>
        <name>1-deoxy-D-xylulose 5-phosphate</name>
        <dbReference type="ChEBI" id="CHEBI:57792"/>
    </ligand>
</feature>
<feature type="binding site" evidence="1">
    <location>
        <position position="234"/>
    </location>
    <ligand>
        <name>1-deoxy-D-xylulose 5-phosphate</name>
        <dbReference type="ChEBI" id="CHEBI:57792"/>
    </ligand>
</feature>
<feature type="binding site" evidence="1">
    <location>
        <position position="237"/>
    </location>
    <ligand>
        <name>1-deoxy-D-xylulose 5-phosphate</name>
        <dbReference type="ChEBI" id="CHEBI:57792"/>
    </ligand>
</feature>
<feature type="binding site" evidence="1">
    <location>
        <position position="237"/>
    </location>
    <ligand>
        <name>Mn(2+)</name>
        <dbReference type="ChEBI" id="CHEBI:29035"/>
    </ligand>
</feature>
<reference key="1">
    <citation type="submission" date="2005-07" db="EMBL/GenBank/DDBJ databases">
        <title>Complete sequence of Synechococcus sp. CC9605.</title>
        <authorList>
            <consortium name="US DOE Joint Genome Institute"/>
            <person name="Copeland A."/>
            <person name="Lucas S."/>
            <person name="Lapidus A."/>
            <person name="Barry K."/>
            <person name="Detter J.C."/>
            <person name="Glavina T."/>
            <person name="Hammon N."/>
            <person name="Israni S."/>
            <person name="Pitluck S."/>
            <person name="Schmutz J."/>
            <person name="Martinez M."/>
            <person name="Larimer F."/>
            <person name="Land M."/>
            <person name="Kyrpides N."/>
            <person name="Ivanova N."/>
            <person name="Richardson P."/>
        </authorList>
    </citation>
    <scope>NUCLEOTIDE SEQUENCE [LARGE SCALE GENOMIC DNA]</scope>
    <source>
        <strain>CC9605</strain>
    </source>
</reference>
<protein>
    <recommendedName>
        <fullName evidence="1">1-deoxy-D-xylulose 5-phosphate reductoisomerase</fullName>
        <shortName evidence="1">DXP reductoisomerase</shortName>
        <ecNumber evidence="1">1.1.1.267</ecNumber>
    </recommendedName>
    <alternativeName>
        <fullName evidence="1">1-deoxyxylulose-5-phosphate reductoisomerase</fullName>
    </alternativeName>
    <alternativeName>
        <fullName evidence="1">2-C-methyl-D-erythritol 4-phosphate synthase</fullName>
    </alternativeName>
</protein>
<sequence length="415" mass="44601">MKAISVLGSTGSIGTQTLQIAEEFPEQFRVVALTAGRNLKLLVEQVQRHRPEVVALADSDLLPELQERLKDAGVTGADAPQLVGGADGLNVAAAWDSADLVVTGIVGCAGLLPTLAAIRAGKDLALANKETLIAAGPVVLPELKKSGSRLLPADSEHSAIFQCLQGTPWAENARLSTGVPTPGLRRIQLTASGGAFRDWTAADLEKATVADATSHPNWSMGRKITVDSASLMNKGLEVIEAHYLFGLDYDHIEIVIHPQSIIHSMIELADSSVLAQLGWPDMKLPILYCLSWPSRLETPWRRLDLTEVGQLSFRAPDPAKYPCMELAYAAGSAGGTMPAVMNAANEEAVAQFLEEKIHFLDIPTVIEAACERHKPDLMAQPQLDDVLRVDQWARTAVREQVNRGVTRLPMGAIAA</sequence>
<comment type="function">
    <text evidence="1">Catalyzes the NADPH-dependent rearrangement and reduction of 1-deoxy-D-xylulose-5-phosphate (DXP) to 2-C-methyl-D-erythritol 4-phosphate (MEP).</text>
</comment>
<comment type="catalytic activity">
    <reaction evidence="1">
        <text>2-C-methyl-D-erythritol 4-phosphate + NADP(+) = 1-deoxy-D-xylulose 5-phosphate + NADPH + H(+)</text>
        <dbReference type="Rhea" id="RHEA:13717"/>
        <dbReference type="ChEBI" id="CHEBI:15378"/>
        <dbReference type="ChEBI" id="CHEBI:57783"/>
        <dbReference type="ChEBI" id="CHEBI:57792"/>
        <dbReference type="ChEBI" id="CHEBI:58262"/>
        <dbReference type="ChEBI" id="CHEBI:58349"/>
        <dbReference type="EC" id="1.1.1.267"/>
    </reaction>
    <physiologicalReaction direction="right-to-left" evidence="1">
        <dbReference type="Rhea" id="RHEA:13719"/>
    </physiologicalReaction>
</comment>
<comment type="cofactor">
    <cofactor evidence="1">
        <name>Mg(2+)</name>
        <dbReference type="ChEBI" id="CHEBI:18420"/>
    </cofactor>
    <cofactor evidence="1">
        <name>Mn(2+)</name>
        <dbReference type="ChEBI" id="CHEBI:29035"/>
    </cofactor>
</comment>
<comment type="pathway">
    <text evidence="1">Isoprenoid biosynthesis; isopentenyl diphosphate biosynthesis via DXP pathway; isopentenyl diphosphate from 1-deoxy-D-xylulose 5-phosphate: step 1/6.</text>
</comment>
<comment type="similarity">
    <text evidence="1">Belongs to the DXR family.</text>
</comment>
<keyword id="KW-0414">Isoprene biosynthesis</keyword>
<keyword id="KW-0464">Manganese</keyword>
<keyword id="KW-0479">Metal-binding</keyword>
<keyword id="KW-0521">NADP</keyword>
<keyword id="KW-0560">Oxidoreductase</keyword>
<proteinExistence type="inferred from homology"/>
<organism>
    <name type="scientific">Synechococcus sp. (strain CC9605)</name>
    <dbReference type="NCBI Taxonomy" id="110662"/>
    <lineage>
        <taxon>Bacteria</taxon>
        <taxon>Bacillati</taxon>
        <taxon>Cyanobacteriota</taxon>
        <taxon>Cyanophyceae</taxon>
        <taxon>Synechococcales</taxon>
        <taxon>Synechococcaceae</taxon>
        <taxon>Synechococcus</taxon>
    </lineage>
</organism>
<gene>
    <name evidence="1" type="primary">dxr</name>
    <name type="ordered locus">Syncc9605_1970</name>
</gene>